<keyword id="KW-0002">3D-structure</keyword>
<keyword id="KW-0007">Acetylation</keyword>
<keyword id="KW-0158">Chromosome</keyword>
<keyword id="KW-0164">Citrullination</keyword>
<keyword id="KW-0238">DNA-binding</keyword>
<keyword id="KW-0379">Hydroxylation</keyword>
<keyword id="KW-1017">Isopeptide bond</keyword>
<keyword id="KW-0488">Methylation</keyword>
<keyword id="KW-0544">Nucleosome core</keyword>
<keyword id="KW-0539">Nucleus</keyword>
<keyword id="KW-0597">Phosphoprotein</keyword>
<keyword id="KW-1185">Reference proteome</keyword>
<keyword id="KW-0832">Ubl conjugation</keyword>
<comment type="function">
    <text>Core component of nucleosome. Nucleosomes wrap and compact DNA into chromatin, limiting DNA accessibility to the cellular machineries which require DNA as a template. Histones thereby play a central role in transcription regulation, DNA repair, DNA replication and chromosomal stability. DNA accessibility is regulated via a complex set of post-translational modifications of histones, also called histone code, and nucleosome remodeling.</text>
</comment>
<comment type="subunit">
    <text>The nucleosome is a histone octamer containing two molecules each of H2A, H2B, H3 and H4 assembled in one H3-H4 heterotetramer and two H2A-H2B heterodimers. The octamer wraps approximately 147 bp of DNA.</text>
</comment>
<comment type="subcellular location">
    <subcellularLocation>
        <location evidence="1">Nucleus</location>
    </subcellularLocation>
    <subcellularLocation>
        <location evidence="1">Chromosome</location>
    </subcellularLocation>
</comment>
<comment type="PTM">
    <text evidence="3">Deiminated on Arg-4 in granulocytes upon calcium entry.</text>
</comment>
<comment type="PTM">
    <text evidence="3 6 7 10">Monoubiquitination of Lys-120 (H2AK119Ub) by RING1, TRIM37 and RNF2/RING2 complex gives a specific tag for epigenetic transcriptional repression and participates in X chromosome inactivation of female mammals. It is involved in the initiation of both imprinted and random X inactivation. Ubiquitinated H2A is enriched in inactive X chromosome chromatin. Ubiquitination of H2A functions downstream of methylation of 'Lys-27' of histone H3 (H3K27me). H2AK119Ub by RNF2/RING2 can also be induced by ultraviolet and may be involved in DNA repair. Following DNA double-strand breaks (DSBs), it is ubiquitinated through 'Lys-63' linkage of ubiquitin moieties by the E2 ligase UBE2N and the E3 ligases RNF8 and RNF168, leading to the recruitment of repair proteins to sites of DNA damage. Ubiquitination at Lys-14 and Lys-16 (H2AK13Ub and H2AK15Ub, respectively) in response to DNA damage is initiated by RNF168 that mediates monoubiquitination at these 2 sites, and 'Lys-63'-linked ubiquitin are then conjugated to monoubiquitin; RNF8 is able to extend 'Lys-63'-linked ubiquitin chains in vitro. H2AK119Ub and ionizing radiation-induced 'Lys-63'-linked ubiquitination (H2AK13Ub and H2AK15Ub) are distinct events.</text>
</comment>
<comment type="PTM">
    <text evidence="3">Phosphorylation on Ser-2 (H2AS1ph) is enhanced during mitosis. Phosphorylation on Ser-2 by RPS6KA5/MSK1 directly represses transcription. Acetylation of H3 inhibits Ser-2 phosphorylation by RPS6KA5/MSK1. Phosphorylation at Thr-121 (H2AT120ph) by DCAF1 is present in the regulatory region of many tumor suppresor genes and down-regulates their transcription.</text>
</comment>
<comment type="PTM">
    <text evidence="8">Symmetric dimethylation on Arg-4 by the PRDM1/PRMT5 complex may play a crucial role in the germ-cell lineage.</text>
</comment>
<comment type="PTM">
    <text evidence="10">Glutamine methylation at Gln-105 (H2AQ104me) by FBL is specifically dedicated to polymerase I. It is present at 35S ribosomal DNA locus and impairs binding of the FACT complex.</text>
</comment>
<comment type="PTM">
    <text evidence="9">Crotonylation (Kcr) is specifically present in male germ cells and marks testis-specific genes in post-meiotic cells, including X-linked genes that escape sex chromosome inactivation in haploid cells. Crotonylation marks active promoters and enhancers and confers resistance to transcriptional repressors. It is also associated with post-meiotically activated genes on autosomes.</text>
</comment>
<comment type="PTM">
    <text evidence="12">Hydroxybutyrylation of histones is induced by starvation.</text>
</comment>
<comment type="PTM">
    <text evidence="2">Lactylated in macrophages by EP300/P300 by using lactoyl-CoA directly derived from endogenous or exogenous lactate, leading to stimulates gene transcription.</text>
</comment>
<comment type="similarity">
    <text evidence="13">Belongs to the histone H2A family.</text>
</comment>
<gene>
    <name evidence="15" type="primary">H2ac12</name>
    <name evidence="15" type="synonym">Hist1h2ah</name>
</gene>
<dbReference type="EMBL" id="AY158914">
    <property type="protein sequence ID" value="AAO06224.1"/>
    <property type="molecule type" value="Genomic_DNA"/>
</dbReference>
<dbReference type="EMBL" id="AL590614">
    <property type="status" value="NOT_ANNOTATED_CDS"/>
    <property type="molecule type" value="Genomic_DNA"/>
</dbReference>
<dbReference type="CCDS" id="CCDS26304.1"/>
<dbReference type="RefSeq" id="NP_783590.1">
    <property type="nucleotide sequence ID" value="NM_175659.2"/>
</dbReference>
<dbReference type="PDB" id="2F8N">
    <property type="method" value="X-ray"/>
    <property type="resolution" value="2.90 A"/>
    <property type="chains" value="K=1-128"/>
</dbReference>
<dbReference type="PDB" id="8GRQ">
    <property type="method" value="EM"/>
    <property type="resolution" value="3.87 A"/>
    <property type="chains" value="C/G=11-120"/>
</dbReference>
<dbReference type="PDBsum" id="2F8N"/>
<dbReference type="PDBsum" id="8GRQ"/>
<dbReference type="EMDB" id="EMD-34212"/>
<dbReference type="SMR" id="Q8CGP6"/>
<dbReference type="BioGRID" id="235087">
    <property type="interactions" value="11"/>
</dbReference>
<dbReference type="FunCoup" id="Q8CGP6">
    <property type="interactions" value="266"/>
</dbReference>
<dbReference type="IntAct" id="Q8CGP6">
    <property type="interactions" value="4"/>
</dbReference>
<dbReference type="MINT" id="Q8CGP6"/>
<dbReference type="GlyGen" id="Q8CGP6">
    <property type="glycosylation" value="1 site, 1 O-linked glycan (1 site)"/>
</dbReference>
<dbReference type="iPTMnet" id="Q8CGP6"/>
<dbReference type="PhosphoSitePlus" id="Q8CGP6"/>
<dbReference type="SwissPalm" id="Q8CGP6"/>
<dbReference type="jPOST" id="Q8CGP6"/>
<dbReference type="Pumba" id="Q8CGP6"/>
<dbReference type="TopDownProteomics" id="Q8CGP6"/>
<dbReference type="Ensembl" id="ENSMUST00000091742.6">
    <property type="protein sequence ID" value="ENSMUSP00000089336.5"/>
    <property type="gene ID" value="ENSMUSG00000069302.6"/>
</dbReference>
<dbReference type="GeneID" id="319168"/>
<dbReference type="KEGG" id="mmu:319168"/>
<dbReference type="UCSC" id="uc007psa.2">
    <property type="organism name" value="mouse"/>
</dbReference>
<dbReference type="AGR" id="MGI:2448295"/>
<dbReference type="CTD" id="85235"/>
<dbReference type="MGI" id="MGI:2448295">
    <property type="gene designation" value="H2ac12"/>
</dbReference>
<dbReference type="VEuPathDB" id="HostDB:ENSMUSG00000069302"/>
<dbReference type="eggNOG" id="KOG1756">
    <property type="taxonomic scope" value="Eukaryota"/>
</dbReference>
<dbReference type="GeneTree" id="ENSGT00940000153092"/>
<dbReference type="HOGENOM" id="CLU_062828_3_3_1"/>
<dbReference type="InParanoid" id="Q8CGP6"/>
<dbReference type="OMA" id="KSDHRAG"/>
<dbReference type="OrthoDB" id="9610409at2759"/>
<dbReference type="PhylomeDB" id="Q8CGP6"/>
<dbReference type="TreeFam" id="TF300137"/>
<dbReference type="Reactome" id="R-MMU-110330">
    <property type="pathway name" value="Recognition and association of DNA glycosylase with site containing an affected purine"/>
</dbReference>
<dbReference type="Reactome" id="R-MMU-110331">
    <property type="pathway name" value="Cleavage of the damaged purine"/>
</dbReference>
<dbReference type="Reactome" id="R-MMU-212300">
    <property type="pathway name" value="PRC2 methylates histones and DNA"/>
</dbReference>
<dbReference type="Reactome" id="R-MMU-2299718">
    <property type="pathway name" value="Condensation of Prophase Chromosomes"/>
</dbReference>
<dbReference type="Reactome" id="R-MMU-2559586">
    <property type="pathway name" value="DNA Damage/Telomere Stress Induced Senescence"/>
</dbReference>
<dbReference type="Reactome" id="R-MMU-3214815">
    <property type="pathway name" value="HDACs deacetylate histones"/>
</dbReference>
<dbReference type="Reactome" id="R-MMU-3214858">
    <property type="pathway name" value="RMTs methylate histone arginines"/>
</dbReference>
<dbReference type="Reactome" id="R-MMU-5689603">
    <property type="pathway name" value="UCH proteinases"/>
</dbReference>
<dbReference type="Reactome" id="R-MMU-5689880">
    <property type="pathway name" value="Ub-specific processing proteases"/>
</dbReference>
<dbReference type="Reactome" id="R-MMU-5689901">
    <property type="pathway name" value="Metalloprotease DUBs"/>
</dbReference>
<dbReference type="Reactome" id="R-MMU-606279">
    <property type="pathway name" value="Deposition of new CENPA-containing nucleosomes at the centromere"/>
</dbReference>
<dbReference type="Reactome" id="R-MMU-8936459">
    <property type="pathway name" value="RUNX1 regulates genes involved in megakaryocyte differentiation and platelet function"/>
</dbReference>
<dbReference type="Reactome" id="R-MMU-9670095">
    <property type="pathway name" value="Inhibition of DNA recombination at telomere"/>
</dbReference>
<dbReference type="Reactome" id="R-MMU-9841922">
    <property type="pathway name" value="MLL4 and MLL3 complexes regulate expression of PPARG target genes in adipogenesis and hepatic steatosis"/>
</dbReference>
<dbReference type="Reactome" id="R-MMU-9843940">
    <property type="pathway name" value="Regulation of endogenous retroelements by KRAB-ZFP proteins"/>
</dbReference>
<dbReference type="BioGRID-ORCS" id="319168">
    <property type="hits" value="9 hits in 72 CRISPR screens"/>
</dbReference>
<dbReference type="EvolutionaryTrace" id="Q8CGP6"/>
<dbReference type="PRO" id="PR:Q8CGP6"/>
<dbReference type="Proteomes" id="UP000000589">
    <property type="component" value="Chromosome 13"/>
</dbReference>
<dbReference type="RNAct" id="Q8CGP6">
    <property type="molecule type" value="protein"/>
</dbReference>
<dbReference type="Bgee" id="ENSMUSG00000069302">
    <property type="expression patterns" value="Expressed in uterus and 49 other cell types or tissues"/>
</dbReference>
<dbReference type="ExpressionAtlas" id="Q8CGP6">
    <property type="expression patterns" value="baseline and differential"/>
</dbReference>
<dbReference type="GO" id="GO:0000786">
    <property type="term" value="C:nucleosome"/>
    <property type="evidence" value="ECO:0007669"/>
    <property type="project" value="UniProtKB-KW"/>
</dbReference>
<dbReference type="GO" id="GO:0005634">
    <property type="term" value="C:nucleus"/>
    <property type="evidence" value="ECO:0007669"/>
    <property type="project" value="UniProtKB-SubCell"/>
</dbReference>
<dbReference type="GO" id="GO:0003677">
    <property type="term" value="F:DNA binding"/>
    <property type="evidence" value="ECO:0007669"/>
    <property type="project" value="UniProtKB-KW"/>
</dbReference>
<dbReference type="GO" id="GO:0046982">
    <property type="term" value="F:protein heterodimerization activity"/>
    <property type="evidence" value="ECO:0007669"/>
    <property type="project" value="InterPro"/>
</dbReference>
<dbReference type="GO" id="GO:0030527">
    <property type="term" value="F:structural constituent of chromatin"/>
    <property type="evidence" value="ECO:0007669"/>
    <property type="project" value="InterPro"/>
</dbReference>
<dbReference type="CDD" id="cd00074">
    <property type="entry name" value="HFD_H2A"/>
    <property type="match status" value="1"/>
</dbReference>
<dbReference type="FunFam" id="1.10.20.10:FF:000103">
    <property type="entry name" value="Histone H2A type 1"/>
    <property type="match status" value="1"/>
</dbReference>
<dbReference type="Gene3D" id="1.10.20.10">
    <property type="entry name" value="Histone, subunit A"/>
    <property type="match status" value="1"/>
</dbReference>
<dbReference type="InterPro" id="IPR009072">
    <property type="entry name" value="Histone-fold"/>
</dbReference>
<dbReference type="InterPro" id="IPR002119">
    <property type="entry name" value="Histone_H2A"/>
</dbReference>
<dbReference type="InterPro" id="IPR007125">
    <property type="entry name" value="Histone_H2A/H2B/H3"/>
</dbReference>
<dbReference type="InterPro" id="IPR032454">
    <property type="entry name" value="Histone_H2A_C"/>
</dbReference>
<dbReference type="InterPro" id="IPR032458">
    <property type="entry name" value="Histone_H2A_CS"/>
</dbReference>
<dbReference type="PANTHER" id="PTHR23430">
    <property type="entry name" value="HISTONE H2A"/>
    <property type="match status" value="1"/>
</dbReference>
<dbReference type="Pfam" id="PF00125">
    <property type="entry name" value="Histone"/>
    <property type="match status" value="1"/>
</dbReference>
<dbReference type="Pfam" id="PF16211">
    <property type="entry name" value="Histone_H2A_C"/>
    <property type="match status" value="1"/>
</dbReference>
<dbReference type="PRINTS" id="PR00620">
    <property type="entry name" value="HISTONEH2A"/>
</dbReference>
<dbReference type="SMART" id="SM00414">
    <property type="entry name" value="H2A"/>
    <property type="match status" value="1"/>
</dbReference>
<dbReference type="SUPFAM" id="SSF47113">
    <property type="entry name" value="Histone-fold"/>
    <property type="match status" value="1"/>
</dbReference>
<dbReference type="PROSITE" id="PS00046">
    <property type="entry name" value="HISTONE_H2A"/>
    <property type="match status" value="1"/>
</dbReference>
<accession>Q8CGP6</accession>
<organism>
    <name type="scientific">Mus musculus</name>
    <name type="common">Mouse</name>
    <dbReference type="NCBI Taxonomy" id="10090"/>
    <lineage>
        <taxon>Eukaryota</taxon>
        <taxon>Metazoa</taxon>
        <taxon>Chordata</taxon>
        <taxon>Craniata</taxon>
        <taxon>Vertebrata</taxon>
        <taxon>Euteleostomi</taxon>
        <taxon>Mammalia</taxon>
        <taxon>Eutheria</taxon>
        <taxon>Euarchontoglires</taxon>
        <taxon>Glires</taxon>
        <taxon>Rodentia</taxon>
        <taxon>Myomorpha</taxon>
        <taxon>Muroidea</taxon>
        <taxon>Muridae</taxon>
        <taxon>Murinae</taxon>
        <taxon>Mus</taxon>
        <taxon>Mus</taxon>
    </lineage>
</organism>
<reference key="1">
    <citation type="journal article" date="2002" name="Genomics">
        <title>The human and mouse replication-dependent histone genes.</title>
        <authorList>
            <person name="Marzluff W.F."/>
            <person name="Gongidi P."/>
            <person name="Woods K.R."/>
            <person name="Jin J."/>
            <person name="Maltais L.J."/>
        </authorList>
    </citation>
    <scope>NUCLEOTIDE SEQUENCE [GENOMIC DNA]</scope>
</reference>
<reference key="2">
    <citation type="journal article" date="2009" name="PLoS Biol.">
        <title>Lineage-specific biology revealed by a finished genome assembly of the mouse.</title>
        <authorList>
            <person name="Church D.M."/>
            <person name="Goodstadt L."/>
            <person name="Hillier L.W."/>
            <person name="Zody M.C."/>
            <person name="Goldstein S."/>
            <person name="She X."/>
            <person name="Bult C.J."/>
            <person name="Agarwala R."/>
            <person name="Cherry J.L."/>
            <person name="DiCuccio M."/>
            <person name="Hlavina W."/>
            <person name="Kapustin Y."/>
            <person name="Meric P."/>
            <person name="Maglott D."/>
            <person name="Birtle Z."/>
            <person name="Marques A.C."/>
            <person name="Graves T."/>
            <person name="Zhou S."/>
            <person name="Teague B."/>
            <person name="Potamousis K."/>
            <person name="Churas C."/>
            <person name="Place M."/>
            <person name="Herschleb J."/>
            <person name="Runnheim R."/>
            <person name="Forrest D."/>
            <person name="Amos-Landgraf J."/>
            <person name="Schwartz D.C."/>
            <person name="Cheng Z."/>
            <person name="Lindblad-Toh K."/>
            <person name="Eichler E.E."/>
            <person name="Ponting C.P."/>
        </authorList>
    </citation>
    <scope>NUCLEOTIDE SEQUENCE [LARGE SCALE GENOMIC DNA]</scope>
    <source>
        <strain>C57BL/6J</strain>
    </source>
</reference>
<reference key="3">
    <citation type="journal article" date="2004" name="Dev. Cell">
        <title>Polycomb group proteins Ring1A/B link ubiquitylation of histone H2A to heritable gene silencing and X inactivation.</title>
        <authorList>
            <person name="de Napoles M."/>
            <person name="Mermoud J.E."/>
            <person name="Wakao R."/>
            <person name="Tang Y.A."/>
            <person name="Endoh M."/>
            <person name="Appanah R."/>
            <person name="Nesterova T.B."/>
            <person name="Silva J."/>
            <person name="Otte A.P."/>
            <person name="Vidal M."/>
            <person name="Koseki H."/>
            <person name="Brockdorff N."/>
        </authorList>
    </citation>
    <scope>UBIQUITINATION AT LYS-120</scope>
</reference>
<reference key="4">
    <citation type="journal article" date="2004" name="J. Biol. Chem.">
        <title>Ring1b-mediated H2A ubiquitination associates with inactive X chromosomes and is involved in initiation of X inactivation.</title>
        <authorList>
            <person name="Fang J."/>
            <person name="Chen T."/>
            <person name="Chadwick B."/>
            <person name="Li E."/>
            <person name="Zhang Y."/>
        </authorList>
    </citation>
    <scope>UBIQUITINATION AT LYS-120</scope>
</reference>
<reference key="5">
    <citation type="journal article" date="2006" name="Nat. Cell Biol.">
        <title>Blimp1 associates with Prmt5 and directs histone arginine methylation in mouse germ cells.</title>
        <authorList>
            <person name="Ancelin K."/>
            <person name="Lange U.C."/>
            <person name="Hajkova P."/>
            <person name="Schneider R."/>
            <person name="Bannister A.J."/>
            <person name="Kouzarides T."/>
            <person name="Surani M.A."/>
        </authorList>
    </citation>
    <scope>METHYLATION AT ARG-4</scope>
</reference>
<reference key="6">
    <citation type="journal article" date="2011" name="Cell">
        <title>Identification of 67 histone marks and histone lysine crotonylation as a new type of histone modification.</title>
        <authorList>
            <person name="Tan M."/>
            <person name="Luo H."/>
            <person name="Lee S."/>
            <person name="Jin F."/>
            <person name="Yang J.S."/>
            <person name="Montellier E."/>
            <person name="Buchou T."/>
            <person name="Cheng Z."/>
            <person name="Rousseaux S."/>
            <person name="Rajagopal N."/>
            <person name="Lu Z."/>
            <person name="Ye Z."/>
            <person name="Zhu Q."/>
            <person name="Wysocka J."/>
            <person name="Ye Y."/>
            <person name="Khochbin S."/>
            <person name="Ren B."/>
            <person name="Zhao Y."/>
        </authorList>
    </citation>
    <scope>CROTONYLATION AT LYS-37 AND LYS-119</scope>
</reference>
<reference key="7">
    <citation type="journal article" date="2014" name="Nat. Chem. Biol.">
        <title>Lysine 2-hydroxyisobutyrylation is a widely distributed active histone mark.</title>
        <authorList>
            <person name="Dai L."/>
            <person name="Peng C."/>
            <person name="Montellier E."/>
            <person name="Lu Z."/>
            <person name="Chen Y."/>
            <person name="Ishii H."/>
            <person name="Debernardi A."/>
            <person name="Buchou T."/>
            <person name="Rousseaux S."/>
            <person name="Jin F."/>
            <person name="Sabari B.R."/>
            <person name="Deng Z."/>
            <person name="Allis C.D."/>
            <person name="Ren B."/>
            <person name="Khochbin S."/>
            <person name="Zhao Y."/>
        </authorList>
    </citation>
    <scope>HYDROXYBUTYRYLATION AT LYS-6; LYS-10; LYS-37; LYS-75; LYS-76; LYS-96 AND LYS-119</scope>
</reference>
<reference key="8">
    <citation type="journal article" date="2014" name="Nature">
        <title>Glutamine methylation in histone H2A is an RNA-polymerase-I-dedicated modification.</title>
        <authorList>
            <person name="Tessarz P."/>
            <person name="Santos-Rosa H."/>
            <person name="Robson S.C."/>
            <person name="Sylvestersen K.B."/>
            <person name="Nelson C.J."/>
            <person name="Nielsen M.L."/>
            <person name="Kouzarides T."/>
        </authorList>
    </citation>
    <scope>METHYLATION AT GLN-105</scope>
</reference>
<reference key="9">
    <citation type="journal article" date="2016" name="Mol. Cell">
        <title>Metabolic regulation of gene expression by histone lysine beta-hydroxybutyrylation.</title>
        <authorList>
            <person name="Xie Z."/>
            <person name="Zhang D."/>
            <person name="Chung D."/>
            <person name="Tang Z."/>
            <person name="Huang H."/>
            <person name="Dai L."/>
            <person name="Qi S."/>
            <person name="Li J."/>
            <person name="Colak G."/>
            <person name="Chen Y."/>
            <person name="Xia C."/>
            <person name="Peng C."/>
            <person name="Ruan H."/>
            <person name="Kirkey M."/>
            <person name="Wang D."/>
            <person name="Jensen L.M."/>
            <person name="Kwon O.K."/>
            <person name="Lee S."/>
            <person name="Pletcher S.D."/>
            <person name="Tan M."/>
            <person name="Lombard D.B."/>
            <person name="White K.P."/>
            <person name="Zhao H."/>
            <person name="Li J."/>
            <person name="Roeder R.G."/>
            <person name="Yang X."/>
            <person name="Zhao Y."/>
        </authorList>
    </citation>
    <scope>HYDROXYBUTYRYLATION AT LYS-6; LYS-37; LYS-120 AND LYS-126</scope>
</reference>
<sequence length="128" mass="13950">MSGRGKQGGKARAKAKTRSSRAGLQFPVGRVHRLLRKGNYSERVGAGAPVYLAAVLEYLTAEILELAGNAARDNKKTRIIPRHLQLAIRNDEELNKLLGRVTIAQGGVLPNIQAVLLPKKTESHHKAK</sequence>
<name>H2A1H_MOUSE</name>
<protein>
    <recommendedName>
        <fullName>Histone H2A type 1-H</fullName>
    </recommendedName>
    <alternativeName>
        <fullName evidence="15">H2A-clustered histone 12</fullName>
    </alternativeName>
</protein>
<feature type="initiator methionine" description="Removed" evidence="4">
    <location>
        <position position="1"/>
    </location>
</feature>
<feature type="chain" id="PRO_0000227504" description="Histone H2A type 1-H">
    <location>
        <begin position="2"/>
        <end position="128"/>
    </location>
</feature>
<feature type="region of interest" description="Disordered" evidence="5">
    <location>
        <begin position="1"/>
        <end position="22"/>
    </location>
</feature>
<feature type="compositionally biased region" description="Basic residues" evidence="5">
    <location>
        <begin position="7"/>
        <end position="19"/>
    </location>
</feature>
<feature type="modified residue" description="N-acetylserine" evidence="4">
    <location>
        <position position="2"/>
    </location>
</feature>
<feature type="modified residue" description="Phosphoserine; by RPS6KA5" evidence="4">
    <location>
        <position position="2"/>
    </location>
</feature>
<feature type="modified residue" description="Citrulline; alternate" evidence="3">
    <location>
        <position position="4"/>
    </location>
</feature>
<feature type="modified residue" description="Symmetric dimethylarginine; by PRMT5; alternate" evidence="14">
    <location>
        <position position="4"/>
    </location>
</feature>
<feature type="modified residue" description="N6-(2-hydroxyisobutyryl)lysine; alternate" evidence="11">
    <location>
        <position position="6"/>
    </location>
</feature>
<feature type="modified residue" description="N6-(beta-hydroxybutyryl)lysine; alternate" evidence="12">
    <location>
        <position position="6"/>
    </location>
</feature>
<feature type="modified residue" description="N6-(2-hydroxyisobutyryl)lysine; alternate" evidence="11">
    <location>
        <position position="10"/>
    </location>
</feature>
<feature type="modified residue" description="N6-lactoyllysine; alternate" evidence="2">
    <location>
        <position position="10"/>
    </location>
</feature>
<feature type="modified residue" description="N6-succinyllysine; alternate" evidence="4">
    <location>
        <position position="10"/>
    </location>
</feature>
<feature type="modified residue" description="N6-(2-hydroxyisobutyryl)lysine; alternate" evidence="11">
    <location>
        <position position="37"/>
    </location>
</feature>
<feature type="modified residue" description="N6-(beta-hydroxybutyryl)lysine; alternate" evidence="12">
    <location>
        <position position="37"/>
    </location>
</feature>
<feature type="modified residue" description="N6-crotonyllysine; alternate" evidence="9">
    <location>
        <position position="37"/>
    </location>
</feature>
<feature type="modified residue" description="N6-(2-hydroxyisobutyryl)lysine" evidence="11">
    <location>
        <position position="75"/>
    </location>
</feature>
<feature type="modified residue" description="N6-(2-hydroxyisobutyryl)lysine" evidence="11">
    <location>
        <position position="76"/>
    </location>
</feature>
<feature type="modified residue" description="N6-(2-hydroxyisobutyryl)lysine; alternate" evidence="11">
    <location>
        <position position="96"/>
    </location>
</feature>
<feature type="modified residue" description="N6-glutaryllysine; alternate" evidence="3">
    <location>
        <position position="96"/>
    </location>
</feature>
<feature type="modified residue" description="N6-succinyllysine; alternate" evidence="4">
    <location>
        <position position="96"/>
    </location>
</feature>
<feature type="modified residue" description="N5-methylglutamine" evidence="10">
    <location>
        <position position="105"/>
    </location>
</feature>
<feature type="modified residue" description="N6-(2-hydroxyisobutyryl)lysine; alternate" evidence="11">
    <location>
        <position position="119"/>
    </location>
</feature>
<feature type="modified residue" description="N6-crotonyllysine; alternate" evidence="9">
    <location>
        <position position="119"/>
    </location>
</feature>
<feature type="modified residue" description="N6-glutaryllysine; alternate" evidence="3">
    <location>
        <position position="119"/>
    </location>
</feature>
<feature type="modified residue" description="N6-(beta-hydroxybutyryl)lysine; alternate" evidence="12">
    <location>
        <position position="120"/>
    </location>
</feature>
<feature type="modified residue" description="N6-crotonyllysine; alternate" evidence="3">
    <location>
        <position position="120"/>
    </location>
</feature>
<feature type="modified residue" description="N6-glutaryllysine; alternate" evidence="3">
    <location>
        <position position="120"/>
    </location>
</feature>
<feature type="modified residue" description="Phosphothreonine; by DCAF1" evidence="4">
    <location>
        <position position="121"/>
    </location>
</feature>
<feature type="modified residue" description="N6-(beta-hydroxybutyryl)lysine; alternate" evidence="12">
    <location>
        <position position="126"/>
    </location>
</feature>
<feature type="modified residue" description="N6-crotonyllysine; alternate" evidence="3">
    <location>
        <position position="126"/>
    </location>
</feature>
<feature type="modified residue" description="N6-glutaryllysine; alternate" evidence="3">
    <location>
        <position position="126"/>
    </location>
</feature>
<feature type="cross-link" description="Glycyl lysine isopeptide (Lys-Gly) (interchain with G-Cter in ubiquitin)" evidence="4">
    <location>
        <position position="14"/>
    </location>
</feature>
<feature type="cross-link" description="Glycyl lysine isopeptide (Lys-Gly) (interchain with G-Cter in ubiquitin)" evidence="4">
    <location>
        <position position="16"/>
    </location>
</feature>
<feature type="cross-link" description="Glycyl lysine isopeptide (Lys-Gly) (interchain with G-Cter in ubiquitin); alternate" evidence="6 7">
    <location>
        <position position="120"/>
    </location>
</feature>
<feature type="helix" evidence="16">
    <location>
        <begin position="18"/>
        <end position="22"/>
    </location>
</feature>
<feature type="helix" evidence="16">
    <location>
        <begin position="28"/>
        <end position="37"/>
    </location>
</feature>
<feature type="strand" evidence="16">
    <location>
        <begin position="42"/>
        <end position="44"/>
    </location>
</feature>
<feature type="helix" evidence="16">
    <location>
        <begin position="48"/>
        <end position="73"/>
    </location>
</feature>
<feature type="strand" evidence="16">
    <location>
        <begin position="77"/>
        <end position="79"/>
    </location>
</feature>
<feature type="helix" evidence="16">
    <location>
        <begin position="81"/>
        <end position="90"/>
    </location>
</feature>
<feature type="helix" evidence="16">
    <location>
        <begin position="92"/>
        <end position="97"/>
    </location>
</feature>
<feature type="turn" evidence="16">
    <location>
        <begin position="98"/>
        <end position="100"/>
    </location>
</feature>
<feature type="strand" evidence="16">
    <location>
        <begin position="101"/>
        <end position="103"/>
    </location>
</feature>
<feature type="helix" evidence="16">
    <location>
        <begin position="114"/>
        <end position="116"/>
    </location>
</feature>
<proteinExistence type="evidence at protein level"/>
<evidence type="ECO:0000250" key="1"/>
<evidence type="ECO:0000250" key="2">
    <source>
        <dbReference type="UniProtKB" id="P0C0S5"/>
    </source>
</evidence>
<evidence type="ECO:0000250" key="3">
    <source>
        <dbReference type="UniProtKB" id="P0C0S8"/>
    </source>
</evidence>
<evidence type="ECO:0000250" key="4">
    <source>
        <dbReference type="UniProtKB" id="Q96KK5"/>
    </source>
</evidence>
<evidence type="ECO:0000256" key="5">
    <source>
        <dbReference type="SAM" id="MobiDB-lite"/>
    </source>
</evidence>
<evidence type="ECO:0000269" key="6">
    <source>
    </source>
</evidence>
<evidence type="ECO:0000269" key="7">
    <source>
    </source>
</evidence>
<evidence type="ECO:0000269" key="8">
    <source>
    </source>
</evidence>
<evidence type="ECO:0000269" key="9">
    <source>
    </source>
</evidence>
<evidence type="ECO:0000269" key="10">
    <source>
    </source>
</evidence>
<evidence type="ECO:0000269" key="11">
    <source>
    </source>
</evidence>
<evidence type="ECO:0000269" key="12">
    <source>
    </source>
</evidence>
<evidence type="ECO:0000305" key="13"/>
<evidence type="ECO:0000305" key="14">
    <source>
    </source>
</evidence>
<evidence type="ECO:0000312" key="15">
    <source>
        <dbReference type="MGI" id="MGI:2448295"/>
    </source>
</evidence>
<evidence type="ECO:0007829" key="16">
    <source>
        <dbReference type="PDB" id="2F8N"/>
    </source>
</evidence>